<organism>
    <name type="scientific">Schizosaccharomyces pombe (strain 972 / ATCC 24843)</name>
    <name type="common">Fission yeast</name>
    <dbReference type="NCBI Taxonomy" id="284812"/>
    <lineage>
        <taxon>Eukaryota</taxon>
        <taxon>Fungi</taxon>
        <taxon>Dikarya</taxon>
        <taxon>Ascomycota</taxon>
        <taxon>Taphrinomycotina</taxon>
        <taxon>Schizosaccharomycetes</taxon>
        <taxon>Schizosaccharomycetales</taxon>
        <taxon>Schizosaccharomycetaceae</taxon>
        <taxon>Schizosaccharomyces</taxon>
    </lineage>
</organism>
<proteinExistence type="inferred from homology"/>
<feature type="chain" id="PRO_0000374027" description="Uncharacterized oxidoreductase C663.06c">
    <location>
        <begin position="1"/>
        <end position="253"/>
    </location>
</feature>
<feature type="active site" description="Proton donor" evidence="2">
    <location>
        <position position="158"/>
    </location>
</feature>
<feature type="active site" description="Lowers pKa of active site Tyr" evidence="2">
    <location>
        <position position="162"/>
    </location>
</feature>
<feature type="binding site" evidence="1">
    <location>
        <position position="17"/>
    </location>
    <ligand>
        <name>NADP(+)</name>
        <dbReference type="ChEBI" id="CHEBI:58349"/>
    </ligand>
</feature>
<feature type="binding site" evidence="1">
    <location>
        <position position="36"/>
    </location>
    <ligand>
        <name>NADP(+)</name>
        <dbReference type="ChEBI" id="CHEBI:58349"/>
    </ligand>
</feature>
<feature type="binding site" evidence="1">
    <location>
        <position position="62"/>
    </location>
    <ligand>
        <name>NADP(+)</name>
        <dbReference type="ChEBI" id="CHEBI:58349"/>
    </ligand>
</feature>
<feature type="binding site" evidence="2">
    <location>
        <position position="89"/>
    </location>
    <ligand>
        <name>NADP(+)</name>
        <dbReference type="ChEBI" id="CHEBI:58349"/>
    </ligand>
</feature>
<feature type="binding site" evidence="2">
    <location>
        <position position="158"/>
    </location>
    <ligand>
        <name>NADP(+)</name>
        <dbReference type="ChEBI" id="CHEBI:58349"/>
    </ligand>
</feature>
<feature type="binding site" evidence="2">
    <location>
        <position position="162"/>
    </location>
    <ligand>
        <name>NADP(+)</name>
        <dbReference type="ChEBI" id="CHEBI:58349"/>
    </ligand>
</feature>
<feature type="binding site" evidence="2">
    <location>
        <position position="191"/>
    </location>
    <ligand>
        <name>NADP(+)</name>
        <dbReference type="ChEBI" id="CHEBI:58349"/>
    </ligand>
</feature>
<feature type="binding site" evidence="1">
    <location>
        <position position="193"/>
    </location>
    <ligand>
        <name>NADP(+)</name>
        <dbReference type="ChEBI" id="CHEBI:58349"/>
    </ligand>
</feature>
<gene>
    <name type="ORF">SPCC663.06c</name>
</gene>
<accession>Q7Z9I4</accession>
<reference key="1">
    <citation type="journal article" date="2002" name="Nature">
        <title>The genome sequence of Schizosaccharomyces pombe.</title>
        <authorList>
            <person name="Wood V."/>
            <person name="Gwilliam R."/>
            <person name="Rajandream M.A."/>
            <person name="Lyne M.H."/>
            <person name="Lyne R."/>
            <person name="Stewart A."/>
            <person name="Sgouros J.G."/>
            <person name="Peat N."/>
            <person name="Hayles J."/>
            <person name="Baker S.G."/>
            <person name="Basham D."/>
            <person name="Bowman S."/>
            <person name="Brooks K."/>
            <person name="Brown D."/>
            <person name="Brown S."/>
            <person name="Chillingworth T."/>
            <person name="Churcher C.M."/>
            <person name="Collins M."/>
            <person name="Connor R."/>
            <person name="Cronin A."/>
            <person name="Davis P."/>
            <person name="Feltwell T."/>
            <person name="Fraser A."/>
            <person name="Gentles S."/>
            <person name="Goble A."/>
            <person name="Hamlin N."/>
            <person name="Harris D.E."/>
            <person name="Hidalgo J."/>
            <person name="Hodgson G."/>
            <person name="Holroyd S."/>
            <person name="Hornsby T."/>
            <person name="Howarth S."/>
            <person name="Huckle E.J."/>
            <person name="Hunt S."/>
            <person name="Jagels K."/>
            <person name="James K.D."/>
            <person name="Jones L."/>
            <person name="Jones M."/>
            <person name="Leather S."/>
            <person name="McDonald S."/>
            <person name="McLean J."/>
            <person name="Mooney P."/>
            <person name="Moule S."/>
            <person name="Mungall K.L."/>
            <person name="Murphy L.D."/>
            <person name="Niblett D."/>
            <person name="Odell C."/>
            <person name="Oliver K."/>
            <person name="O'Neil S."/>
            <person name="Pearson D."/>
            <person name="Quail M.A."/>
            <person name="Rabbinowitsch E."/>
            <person name="Rutherford K.M."/>
            <person name="Rutter S."/>
            <person name="Saunders D."/>
            <person name="Seeger K."/>
            <person name="Sharp S."/>
            <person name="Skelton J."/>
            <person name="Simmonds M.N."/>
            <person name="Squares R."/>
            <person name="Squares S."/>
            <person name="Stevens K."/>
            <person name="Taylor K."/>
            <person name="Taylor R.G."/>
            <person name="Tivey A."/>
            <person name="Walsh S.V."/>
            <person name="Warren T."/>
            <person name="Whitehead S."/>
            <person name="Woodward J.R."/>
            <person name="Volckaert G."/>
            <person name="Aert R."/>
            <person name="Robben J."/>
            <person name="Grymonprez B."/>
            <person name="Weltjens I."/>
            <person name="Vanstreels E."/>
            <person name="Rieger M."/>
            <person name="Schaefer M."/>
            <person name="Mueller-Auer S."/>
            <person name="Gabel C."/>
            <person name="Fuchs M."/>
            <person name="Duesterhoeft A."/>
            <person name="Fritzc C."/>
            <person name="Holzer E."/>
            <person name="Moestl D."/>
            <person name="Hilbert H."/>
            <person name="Borzym K."/>
            <person name="Langer I."/>
            <person name="Beck A."/>
            <person name="Lehrach H."/>
            <person name="Reinhardt R."/>
            <person name="Pohl T.M."/>
            <person name="Eger P."/>
            <person name="Zimmermann W."/>
            <person name="Wedler H."/>
            <person name="Wambutt R."/>
            <person name="Purnelle B."/>
            <person name="Goffeau A."/>
            <person name="Cadieu E."/>
            <person name="Dreano S."/>
            <person name="Gloux S."/>
            <person name="Lelaure V."/>
            <person name="Mottier S."/>
            <person name="Galibert F."/>
            <person name="Aves S.J."/>
            <person name="Xiang Z."/>
            <person name="Hunt C."/>
            <person name="Moore K."/>
            <person name="Hurst S.M."/>
            <person name="Lucas M."/>
            <person name="Rochet M."/>
            <person name="Gaillardin C."/>
            <person name="Tallada V.A."/>
            <person name="Garzon A."/>
            <person name="Thode G."/>
            <person name="Daga R.R."/>
            <person name="Cruzado L."/>
            <person name="Jimenez J."/>
            <person name="Sanchez M."/>
            <person name="del Rey F."/>
            <person name="Benito J."/>
            <person name="Dominguez A."/>
            <person name="Revuelta J.L."/>
            <person name="Moreno S."/>
            <person name="Armstrong J."/>
            <person name="Forsburg S.L."/>
            <person name="Cerutti L."/>
            <person name="Lowe T."/>
            <person name="McCombie W.R."/>
            <person name="Paulsen I."/>
            <person name="Potashkin J."/>
            <person name="Shpakovski G.V."/>
            <person name="Ussery D."/>
            <person name="Barrell B.G."/>
            <person name="Nurse P."/>
        </authorList>
    </citation>
    <scope>NUCLEOTIDE SEQUENCE [LARGE SCALE GENOMIC DNA]</scope>
    <source>
        <strain>972 / ATCC 24843</strain>
    </source>
</reference>
<reference key="2">
    <citation type="journal article" date="2006" name="Nat. Biotechnol.">
        <title>ORFeome cloning and global analysis of protein localization in the fission yeast Schizosaccharomyces pombe.</title>
        <authorList>
            <person name="Matsuyama A."/>
            <person name="Arai R."/>
            <person name="Yashiroda Y."/>
            <person name="Shirai A."/>
            <person name="Kamata A."/>
            <person name="Sekido S."/>
            <person name="Kobayashi Y."/>
            <person name="Hashimoto A."/>
            <person name="Hamamoto M."/>
            <person name="Hiraoka Y."/>
            <person name="Horinouchi S."/>
            <person name="Yoshida M."/>
        </authorList>
    </citation>
    <scope>SUBCELLULAR LOCATION [LARGE SCALE ANALYSIS]</scope>
</reference>
<name>YCP6_SCHPO</name>
<keyword id="KW-0963">Cytoplasm</keyword>
<keyword id="KW-0521">NADP</keyword>
<keyword id="KW-0539">Nucleus</keyword>
<keyword id="KW-0560">Oxidoreductase</keyword>
<keyword id="KW-1185">Reference proteome</keyword>
<protein>
    <recommendedName>
        <fullName>Uncharacterized oxidoreductase C663.06c</fullName>
        <ecNumber>1.-.-.-</ecNumber>
    </recommendedName>
</protein>
<comment type="subcellular location">
    <subcellularLocation>
        <location evidence="3">Cytoplasm</location>
    </subcellularLocation>
    <subcellularLocation>
        <location evidence="3">Nucleus</location>
    </subcellularLocation>
</comment>
<comment type="similarity">
    <text evidence="4">Belongs to the short-chain dehydrogenases/reductases (SDR) family.</text>
</comment>
<evidence type="ECO:0000250" key="1">
    <source>
        <dbReference type="UniProtKB" id="L0E2Z4"/>
    </source>
</evidence>
<evidence type="ECO:0000250" key="2">
    <source>
        <dbReference type="UniProtKB" id="O93868"/>
    </source>
</evidence>
<evidence type="ECO:0000269" key="3">
    <source>
    </source>
</evidence>
<evidence type="ECO:0000305" key="4"/>
<sequence>MSTTNKIYFIAGGNRGIGLSLVKELSNREGTVVFASARKPEAATELQEWSKSHSNVHIIKLDISSLESANEAAQEVAKAVGKVDVLWVNSGIFHSFNTVLNTPDDVWNSHYKTNVLGPIHVYQAFYPLVKKGESKIIVFTSSLVGSMGAFFPFNQSGYGQSKAALNFTMKEISFELQDEGFIVISIHPGMVRTDSAQEAVNQHAEAKPEILDIFAKQALAPDQSASDMLKVVDNLKPENNGFFFNYDGTTIPY</sequence>
<dbReference type="EC" id="1.-.-.-"/>
<dbReference type="EMBL" id="CU329672">
    <property type="protein sequence ID" value="CAA20366.1"/>
    <property type="molecule type" value="Genomic_DNA"/>
</dbReference>
<dbReference type="PIR" id="T41537">
    <property type="entry name" value="T41537"/>
</dbReference>
<dbReference type="SMR" id="Q7Z9I4"/>
<dbReference type="BioGRID" id="275710">
    <property type="interactions" value="1"/>
</dbReference>
<dbReference type="FunCoup" id="Q7Z9I4">
    <property type="interactions" value="111"/>
</dbReference>
<dbReference type="STRING" id="284812.Q7Z9I4"/>
<dbReference type="iPTMnet" id="Q7Z9I4"/>
<dbReference type="PaxDb" id="4896-SPCC663.06c.1"/>
<dbReference type="EnsemblFungi" id="SPCC663.06c.1">
    <property type="protein sequence ID" value="SPCC663.06c.1:pep"/>
    <property type="gene ID" value="SPCC663.06c"/>
</dbReference>
<dbReference type="KEGG" id="spo:2539138"/>
<dbReference type="PomBase" id="SPCC663.06c"/>
<dbReference type="VEuPathDB" id="FungiDB:SPCC663.06c"/>
<dbReference type="eggNOG" id="KOG1611">
    <property type="taxonomic scope" value="Eukaryota"/>
</dbReference>
<dbReference type="HOGENOM" id="CLU_010194_9_1_1"/>
<dbReference type="InParanoid" id="Q7Z9I4"/>
<dbReference type="OMA" id="CCLEVIS"/>
<dbReference type="PhylomeDB" id="Q7Z9I4"/>
<dbReference type="PRO" id="PR:Q7Z9I4"/>
<dbReference type="Proteomes" id="UP000002485">
    <property type="component" value="Chromosome III"/>
</dbReference>
<dbReference type="GO" id="GO:0005737">
    <property type="term" value="C:cytoplasm"/>
    <property type="evidence" value="ECO:0000318"/>
    <property type="project" value="GO_Central"/>
</dbReference>
<dbReference type="GO" id="GO:0005829">
    <property type="term" value="C:cytosol"/>
    <property type="evidence" value="ECO:0007005"/>
    <property type="project" value="PomBase"/>
</dbReference>
<dbReference type="GO" id="GO:0005634">
    <property type="term" value="C:nucleus"/>
    <property type="evidence" value="ECO:0007005"/>
    <property type="project" value="PomBase"/>
</dbReference>
<dbReference type="GO" id="GO:0016491">
    <property type="term" value="F:oxidoreductase activity"/>
    <property type="evidence" value="ECO:0000318"/>
    <property type="project" value="GO_Central"/>
</dbReference>
<dbReference type="GO" id="GO:0110095">
    <property type="term" value="P:cellular detoxification of aldehyde"/>
    <property type="evidence" value="ECO:0000250"/>
    <property type="project" value="PomBase"/>
</dbReference>
<dbReference type="CDD" id="cd05325">
    <property type="entry name" value="carb_red_sniffer_like_SDR_c"/>
    <property type="match status" value="1"/>
</dbReference>
<dbReference type="FunFam" id="3.40.50.720:FF:000599">
    <property type="entry name" value="Uncharacterized oxidoreductase C663.06c"/>
    <property type="match status" value="1"/>
</dbReference>
<dbReference type="Gene3D" id="3.40.50.720">
    <property type="entry name" value="NAD(P)-binding Rossmann-like Domain"/>
    <property type="match status" value="1"/>
</dbReference>
<dbReference type="InterPro" id="IPR051468">
    <property type="entry name" value="Fungal_SecMetab_SDRs"/>
</dbReference>
<dbReference type="InterPro" id="IPR036291">
    <property type="entry name" value="NAD(P)-bd_dom_sf"/>
</dbReference>
<dbReference type="InterPro" id="IPR002347">
    <property type="entry name" value="SDR_fam"/>
</dbReference>
<dbReference type="PANTHER" id="PTHR43544:SF7">
    <property type="entry name" value="NADB-LER2"/>
    <property type="match status" value="1"/>
</dbReference>
<dbReference type="PANTHER" id="PTHR43544">
    <property type="entry name" value="SHORT-CHAIN DEHYDROGENASE/REDUCTASE"/>
    <property type="match status" value="1"/>
</dbReference>
<dbReference type="Pfam" id="PF00106">
    <property type="entry name" value="adh_short"/>
    <property type="match status" value="1"/>
</dbReference>
<dbReference type="PRINTS" id="PR00081">
    <property type="entry name" value="GDHRDH"/>
</dbReference>
<dbReference type="SUPFAM" id="SSF51735">
    <property type="entry name" value="NAD(P)-binding Rossmann-fold domains"/>
    <property type="match status" value="1"/>
</dbReference>